<feature type="chain" id="PRO_0000228571" description="Ribonuclease 3">
    <location>
        <begin position="1"/>
        <end position="256"/>
    </location>
</feature>
<feature type="domain" description="RNase III" evidence="1">
    <location>
        <begin position="3"/>
        <end position="125"/>
    </location>
</feature>
<feature type="domain" description="DRBM" evidence="1">
    <location>
        <begin position="152"/>
        <end position="222"/>
    </location>
</feature>
<feature type="region of interest" description="Disordered" evidence="2">
    <location>
        <begin position="229"/>
        <end position="256"/>
    </location>
</feature>
<feature type="active site" evidence="1">
    <location>
        <position position="42"/>
    </location>
</feature>
<feature type="active site" evidence="1">
    <location>
        <position position="114"/>
    </location>
</feature>
<feature type="binding site" evidence="1">
    <location>
        <position position="38"/>
    </location>
    <ligand>
        <name>Mg(2+)</name>
        <dbReference type="ChEBI" id="CHEBI:18420"/>
    </ligand>
</feature>
<feature type="binding site" evidence="1">
    <location>
        <position position="111"/>
    </location>
    <ligand>
        <name>Mg(2+)</name>
        <dbReference type="ChEBI" id="CHEBI:18420"/>
    </ligand>
</feature>
<feature type="binding site" evidence="1">
    <location>
        <position position="114"/>
    </location>
    <ligand>
        <name>Mg(2+)</name>
        <dbReference type="ChEBI" id="CHEBI:18420"/>
    </ligand>
</feature>
<keyword id="KW-0963">Cytoplasm</keyword>
<keyword id="KW-0255">Endonuclease</keyword>
<keyword id="KW-0378">Hydrolase</keyword>
<keyword id="KW-0460">Magnesium</keyword>
<keyword id="KW-0479">Metal-binding</keyword>
<keyword id="KW-0507">mRNA processing</keyword>
<keyword id="KW-0540">Nuclease</keyword>
<keyword id="KW-0694">RNA-binding</keyword>
<keyword id="KW-0698">rRNA processing</keyword>
<keyword id="KW-0699">rRNA-binding</keyword>
<keyword id="KW-0819">tRNA processing</keyword>
<sequence length="256" mass="28529">MNLDALQQRLGYRFSKPELLQQALTHRSHSAQHNERLEFLGDSVLNCAVADMLFGMFGKLDEGDLSRVRANLVKQQALYEIAQMLQLSEVLRLGEGELKSGGFRRPSILADALEAIVGAVFLDAGFEAARTLIRKLYIPILEQVDPRTLGKDAKTLLQEYLQGHKIALPQYNVIATHGAAHSQQFEVECMVPKLEVRVFGTGASRRAAEQAAAKLALDEVQKLVPQLLKRSRAERTGKTRKQPVPPDPQLSLRLKE</sequence>
<name>RNC_CUPPJ</name>
<comment type="function">
    <text evidence="1">Digests double-stranded RNA. Involved in the processing of primary rRNA transcript to yield the immediate precursors to the large and small rRNAs (23S and 16S). Processes some mRNAs, and tRNAs when they are encoded in the rRNA operon. Processes pre-crRNA and tracrRNA of type II CRISPR loci if present in the organism.</text>
</comment>
<comment type="catalytic activity">
    <reaction evidence="1">
        <text>Endonucleolytic cleavage to 5'-phosphomonoester.</text>
        <dbReference type="EC" id="3.1.26.3"/>
    </reaction>
</comment>
<comment type="cofactor">
    <cofactor evidence="1">
        <name>Mg(2+)</name>
        <dbReference type="ChEBI" id="CHEBI:18420"/>
    </cofactor>
</comment>
<comment type="subunit">
    <text evidence="1">Homodimer.</text>
</comment>
<comment type="subcellular location">
    <subcellularLocation>
        <location evidence="1">Cytoplasm</location>
    </subcellularLocation>
</comment>
<comment type="similarity">
    <text evidence="1">Belongs to the ribonuclease III family.</text>
</comment>
<reference key="1">
    <citation type="journal article" date="2010" name="PLoS ONE">
        <title>The complete multipartite genome sequence of Cupriavidus necator JMP134, a versatile pollutant degrader.</title>
        <authorList>
            <person name="Lykidis A."/>
            <person name="Perez-Pantoja D."/>
            <person name="Ledger T."/>
            <person name="Mavromatis K."/>
            <person name="Anderson I.J."/>
            <person name="Ivanova N.N."/>
            <person name="Hooper S.D."/>
            <person name="Lapidus A."/>
            <person name="Lucas S."/>
            <person name="Gonzalez B."/>
            <person name="Kyrpides N.C."/>
        </authorList>
    </citation>
    <scope>NUCLEOTIDE SEQUENCE [LARGE SCALE GENOMIC DNA]</scope>
    <source>
        <strain>JMP134 / LMG 1197</strain>
    </source>
</reference>
<dbReference type="EC" id="3.1.26.3" evidence="1"/>
<dbReference type="EMBL" id="CP000090">
    <property type="protein sequence ID" value="AAZ61615.1"/>
    <property type="molecule type" value="Genomic_DNA"/>
</dbReference>
<dbReference type="SMR" id="Q46Z18"/>
<dbReference type="STRING" id="264198.Reut_A2252"/>
<dbReference type="KEGG" id="reu:Reut_A2252"/>
<dbReference type="eggNOG" id="COG0571">
    <property type="taxonomic scope" value="Bacteria"/>
</dbReference>
<dbReference type="HOGENOM" id="CLU_000907_1_1_4"/>
<dbReference type="OrthoDB" id="9805026at2"/>
<dbReference type="GO" id="GO:0005737">
    <property type="term" value="C:cytoplasm"/>
    <property type="evidence" value="ECO:0007669"/>
    <property type="project" value="UniProtKB-SubCell"/>
</dbReference>
<dbReference type="GO" id="GO:0003725">
    <property type="term" value="F:double-stranded RNA binding"/>
    <property type="evidence" value="ECO:0007669"/>
    <property type="project" value="TreeGrafter"/>
</dbReference>
<dbReference type="GO" id="GO:0046872">
    <property type="term" value="F:metal ion binding"/>
    <property type="evidence" value="ECO:0007669"/>
    <property type="project" value="UniProtKB-KW"/>
</dbReference>
<dbReference type="GO" id="GO:0004525">
    <property type="term" value="F:ribonuclease III activity"/>
    <property type="evidence" value="ECO:0007669"/>
    <property type="project" value="UniProtKB-UniRule"/>
</dbReference>
<dbReference type="GO" id="GO:0019843">
    <property type="term" value="F:rRNA binding"/>
    <property type="evidence" value="ECO:0007669"/>
    <property type="project" value="UniProtKB-KW"/>
</dbReference>
<dbReference type="GO" id="GO:0006397">
    <property type="term" value="P:mRNA processing"/>
    <property type="evidence" value="ECO:0007669"/>
    <property type="project" value="UniProtKB-UniRule"/>
</dbReference>
<dbReference type="GO" id="GO:0010468">
    <property type="term" value="P:regulation of gene expression"/>
    <property type="evidence" value="ECO:0007669"/>
    <property type="project" value="TreeGrafter"/>
</dbReference>
<dbReference type="GO" id="GO:0006364">
    <property type="term" value="P:rRNA processing"/>
    <property type="evidence" value="ECO:0007669"/>
    <property type="project" value="UniProtKB-UniRule"/>
</dbReference>
<dbReference type="GO" id="GO:0008033">
    <property type="term" value="P:tRNA processing"/>
    <property type="evidence" value="ECO:0007669"/>
    <property type="project" value="UniProtKB-KW"/>
</dbReference>
<dbReference type="CDD" id="cd10845">
    <property type="entry name" value="DSRM_RNAse_III_family"/>
    <property type="match status" value="1"/>
</dbReference>
<dbReference type="CDD" id="cd00593">
    <property type="entry name" value="RIBOc"/>
    <property type="match status" value="1"/>
</dbReference>
<dbReference type="FunFam" id="1.10.1520.10:FF:000001">
    <property type="entry name" value="Ribonuclease 3"/>
    <property type="match status" value="1"/>
</dbReference>
<dbReference type="FunFam" id="3.30.160.20:FF:000003">
    <property type="entry name" value="Ribonuclease 3"/>
    <property type="match status" value="1"/>
</dbReference>
<dbReference type="Gene3D" id="3.30.160.20">
    <property type="match status" value="1"/>
</dbReference>
<dbReference type="Gene3D" id="1.10.1520.10">
    <property type="entry name" value="Ribonuclease III domain"/>
    <property type="match status" value="1"/>
</dbReference>
<dbReference type="HAMAP" id="MF_00104">
    <property type="entry name" value="RNase_III"/>
    <property type="match status" value="1"/>
</dbReference>
<dbReference type="InterPro" id="IPR014720">
    <property type="entry name" value="dsRBD_dom"/>
</dbReference>
<dbReference type="InterPro" id="IPR011907">
    <property type="entry name" value="RNase_III"/>
</dbReference>
<dbReference type="InterPro" id="IPR000999">
    <property type="entry name" value="RNase_III_dom"/>
</dbReference>
<dbReference type="InterPro" id="IPR036389">
    <property type="entry name" value="RNase_III_sf"/>
</dbReference>
<dbReference type="NCBIfam" id="TIGR02191">
    <property type="entry name" value="RNaseIII"/>
    <property type="match status" value="1"/>
</dbReference>
<dbReference type="PANTHER" id="PTHR11207:SF0">
    <property type="entry name" value="RIBONUCLEASE 3"/>
    <property type="match status" value="1"/>
</dbReference>
<dbReference type="PANTHER" id="PTHR11207">
    <property type="entry name" value="RIBONUCLEASE III"/>
    <property type="match status" value="1"/>
</dbReference>
<dbReference type="Pfam" id="PF00035">
    <property type="entry name" value="dsrm"/>
    <property type="match status" value="1"/>
</dbReference>
<dbReference type="Pfam" id="PF14622">
    <property type="entry name" value="Ribonucleas_3_3"/>
    <property type="match status" value="1"/>
</dbReference>
<dbReference type="SMART" id="SM00358">
    <property type="entry name" value="DSRM"/>
    <property type="match status" value="1"/>
</dbReference>
<dbReference type="SMART" id="SM00535">
    <property type="entry name" value="RIBOc"/>
    <property type="match status" value="1"/>
</dbReference>
<dbReference type="SUPFAM" id="SSF54768">
    <property type="entry name" value="dsRNA-binding domain-like"/>
    <property type="match status" value="1"/>
</dbReference>
<dbReference type="SUPFAM" id="SSF69065">
    <property type="entry name" value="RNase III domain-like"/>
    <property type="match status" value="1"/>
</dbReference>
<dbReference type="PROSITE" id="PS50137">
    <property type="entry name" value="DS_RBD"/>
    <property type="match status" value="1"/>
</dbReference>
<dbReference type="PROSITE" id="PS00517">
    <property type="entry name" value="RNASE_3_1"/>
    <property type="match status" value="1"/>
</dbReference>
<dbReference type="PROSITE" id="PS50142">
    <property type="entry name" value="RNASE_3_2"/>
    <property type="match status" value="1"/>
</dbReference>
<accession>Q46Z18</accession>
<gene>
    <name evidence="1" type="primary">rnc</name>
    <name type="ordered locus">Reut_A2252</name>
</gene>
<protein>
    <recommendedName>
        <fullName evidence="1">Ribonuclease 3</fullName>
        <ecNumber evidence="1">3.1.26.3</ecNumber>
    </recommendedName>
    <alternativeName>
        <fullName evidence="1">Ribonuclease III</fullName>
        <shortName evidence="1">RNase III</shortName>
    </alternativeName>
</protein>
<proteinExistence type="inferred from homology"/>
<evidence type="ECO:0000255" key="1">
    <source>
        <dbReference type="HAMAP-Rule" id="MF_00104"/>
    </source>
</evidence>
<evidence type="ECO:0000256" key="2">
    <source>
        <dbReference type="SAM" id="MobiDB-lite"/>
    </source>
</evidence>
<organism>
    <name type="scientific">Cupriavidus pinatubonensis (strain JMP 134 / LMG 1197)</name>
    <name type="common">Cupriavidus necator (strain JMP 134)</name>
    <dbReference type="NCBI Taxonomy" id="264198"/>
    <lineage>
        <taxon>Bacteria</taxon>
        <taxon>Pseudomonadati</taxon>
        <taxon>Pseudomonadota</taxon>
        <taxon>Betaproteobacteria</taxon>
        <taxon>Burkholderiales</taxon>
        <taxon>Burkholderiaceae</taxon>
        <taxon>Cupriavidus</taxon>
    </lineage>
</organism>